<dbReference type="EC" id="2.7.7.4" evidence="1"/>
<dbReference type="EMBL" id="CP000485">
    <property type="protein sequence ID" value="ABK84626.1"/>
    <property type="molecule type" value="Genomic_DNA"/>
</dbReference>
<dbReference type="RefSeq" id="WP_000107517.1">
    <property type="nucleotide sequence ID" value="NC_008600.1"/>
</dbReference>
<dbReference type="SMR" id="A0RBN3"/>
<dbReference type="KEGG" id="btl:BALH_1277"/>
<dbReference type="HOGENOM" id="CLU_022950_1_1_9"/>
<dbReference type="UniPathway" id="UPA00140">
    <property type="reaction ID" value="UER00204"/>
</dbReference>
<dbReference type="GO" id="GO:0005524">
    <property type="term" value="F:ATP binding"/>
    <property type="evidence" value="ECO:0007669"/>
    <property type="project" value="UniProtKB-KW"/>
</dbReference>
<dbReference type="GO" id="GO:0004781">
    <property type="term" value="F:sulfate adenylyltransferase (ATP) activity"/>
    <property type="evidence" value="ECO:0007669"/>
    <property type="project" value="UniProtKB-UniRule"/>
</dbReference>
<dbReference type="GO" id="GO:0070814">
    <property type="term" value="P:hydrogen sulfide biosynthetic process"/>
    <property type="evidence" value="ECO:0007669"/>
    <property type="project" value="UniProtKB-UniRule"/>
</dbReference>
<dbReference type="GO" id="GO:0000103">
    <property type="term" value="P:sulfate assimilation"/>
    <property type="evidence" value="ECO:0007669"/>
    <property type="project" value="UniProtKB-UniRule"/>
</dbReference>
<dbReference type="CDD" id="cd00517">
    <property type="entry name" value="ATPS"/>
    <property type="match status" value="1"/>
</dbReference>
<dbReference type="Gene3D" id="3.40.50.620">
    <property type="entry name" value="HUPs"/>
    <property type="match status" value="1"/>
</dbReference>
<dbReference type="Gene3D" id="3.10.400.10">
    <property type="entry name" value="Sulfate adenylyltransferase"/>
    <property type="match status" value="1"/>
</dbReference>
<dbReference type="HAMAP" id="MF_00066">
    <property type="entry name" value="Sulf_adenylyltr"/>
    <property type="match status" value="1"/>
</dbReference>
<dbReference type="InterPro" id="IPR025980">
    <property type="entry name" value="ATP-Sase_PUA-like_dom"/>
</dbReference>
<dbReference type="InterPro" id="IPR015947">
    <property type="entry name" value="PUA-like_sf"/>
</dbReference>
<dbReference type="InterPro" id="IPR014729">
    <property type="entry name" value="Rossmann-like_a/b/a_fold"/>
</dbReference>
<dbReference type="InterPro" id="IPR020792">
    <property type="entry name" value="SO4_adenylyltransferase_pro"/>
</dbReference>
<dbReference type="InterPro" id="IPR024951">
    <property type="entry name" value="Sulfurylase_cat_dom"/>
</dbReference>
<dbReference type="InterPro" id="IPR002650">
    <property type="entry name" value="Sulphate_adenylyltransferase"/>
</dbReference>
<dbReference type="NCBIfam" id="NF003166">
    <property type="entry name" value="PRK04149.1"/>
    <property type="match status" value="1"/>
</dbReference>
<dbReference type="NCBIfam" id="TIGR00339">
    <property type="entry name" value="sopT"/>
    <property type="match status" value="1"/>
</dbReference>
<dbReference type="PANTHER" id="PTHR43509">
    <property type="match status" value="1"/>
</dbReference>
<dbReference type="PANTHER" id="PTHR43509:SF1">
    <property type="entry name" value="SULFATE ADENYLYLTRANSFERASE"/>
    <property type="match status" value="1"/>
</dbReference>
<dbReference type="Pfam" id="PF01747">
    <property type="entry name" value="ATP-sulfurylase"/>
    <property type="match status" value="1"/>
</dbReference>
<dbReference type="Pfam" id="PF14306">
    <property type="entry name" value="PUA_2"/>
    <property type="match status" value="1"/>
</dbReference>
<dbReference type="SUPFAM" id="SSF52374">
    <property type="entry name" value="Nucleotidylyl transferase"/>
    <property type="match status" value="1"/>
</dbReference>
<dbReference type="SUPFAM" id="SSF88697">
    <property type="entry name" value="PUA domain-like"/>
    <property type="match status" value="1"/>
</dbReference>
<feature type="chain" id="PRO_0000340615" description="Sulfate adenylyltransferase">
    <location>
        <begin position="1"/>
        <end position="378"/>
    </location>
</feature>
<keyword id="KW-0067">ATP-binding</keyword>
<keyword id="KW-0547">Nucleotide-binding</keyword>
<keyword id="KW-0548">Nucleotidyltransferase</keyword>
<keyword id="KW-0808">Transferase</keyword>
<organism>
    <name type="scientific">Bacillus thuringiensis (strain Al Hakam)</name>
    <dbReference type="NCBI Taxonomy" id="412694"/>
    <lineage>
        <taxon>Bacteria</taxon>
        <taxon>Bacillati</taxon>
        <taxon>Bacillota</taxon>
        <taxon>Bacilli</taxon>
        <taxon>Bacillales</taxon>
        <taxon>Bacillaceae</taxon>
        <taxon>Bacillus</taxon>
        <taxon>Bacillus cereus group</taxon>
    </lineage>
</organism>
<accession>A0RBN3</accession>
<comment type="catalytic activity">
    <reaction evidence="1">
        <text>sulfate + ATP + H(+) = adenosine 5'-phosphosulfate + diphosphate</text>
        <dbReference type="Rhea" id="RHEA:18133"/>
        <dbReference type="ChEBI" id="CHEBI:15378"/>
        <dbReference type="ChEBI" id="CHEBI:16189"/>
        <dbReference type="ChEBI" id="CHEBI:30616"/>
        <dbReference type="ChEBI" id="CHEBI:33019"/>
        <dbReference type="ChEBI" id="CHEBI:58243"/>
        <dbReference type="EC" id="2.7.7.4"/>
    </reaction>
</comment>
<comment type="pathway">
    <text evidence="1">Sulfur metabolism; hydrogen sulfide biosynthesis; sulfite from sulfate: step 1/3.</text>
</comment>
<comment type="similarity">
    <text evidence="1">Belongs to the sulfate adenylyltransferase family.</text>
</comment>
<gene>
    <name evidence="1" type="primary">sat</name>
    <name type="ordered locus">BALH_1277</name>
</gene>
<name>SAT_BACAH</name>
<evidence type="ECO:0000255" key="1">
    <source>
        <dbReference type="HAMAP-Rule" id="MF_00066"/>
    </source>
</evidence>
<reference key="1">
    <citation type="journal article" date="2007" name="J. Bacteriol.">
        <title>The complete genome sequence of Bacillus thuringiensis Al Hakam.</title>
        <authorList>
            <person name="Challacombe J.F."/>
            <person name="Altherr M.R."/>
            <person name="Xie G."/>
            <person name="Bhotika S.S."/>
            <person name="Brown N."/>
            <person name="Bruce D."/>
            <person name="Campbell C.S."/>
            <person name="Campbell M.L."/>
            <person name="Chen J."/>
            <person name="Chertkov O."/>
            <person name="Cleland C."/>
            <person name="Dimitrijevic M."/>
            <person name="Doggett N.A."/>
            <person name="Fawcett J.J."/>
            <person name="Glavina T."/>
            <person name="Goodwin L.A."/>
            <person name="Green L.D."/>
            <person name="Han C.S."/>
            <person name="Hill K.K."/>
            <person name="Hitchcock P."/>
            <person name="Jackson P.J."/>
            <person name="Keim P."/>
            <person name="Kewalramani A.R."/>
            <person name="Longmire J."/>
            <person name="Lucas S."/>
            <person name="Malfatti S."/>
            <person name="Martinez D."/>
            <person name="McMurry K."/>
            <person name="Meincke L.J."/>
            <person name="Misra M."/>
            <person name="Moseman B.L."/>
            <person name="Mundt M."/>
            <person name="Munk A.C."/>
            <person name="Okinaka R.T."/>
            <person name="Parson-Quintana B."/>
            <person name="Reilly L.P."/>
            <person name="Richardson P."/>
            <person name="Robinson D.L."/>
            <person name="Saunders E."/>
            <person name="Tapia R."/>
            <person name="Tesmer J.G."/>
            <person name="Thayer N."/>
            <person name="Thompson L.S."/>
            <person name="Tice H."/>
            <person name="Ticknor L.O."/>
            <person name="Wills P.L."/>
            <person name="Gilna P."/>
            <person name="Brettin T.S."/>
        </authorList>
    </citation>
    <scope>NUCLEOTIDE SEQUENCE [LARGE SCALE GENOMIC DNA]</scope>
    <source>
        <strain>Al Hakam</strain>
    </source>
</reference>
<proteinExistence type="inferred from homology"/>
<protein>
    <recommendedName>
        <fullName evidence="1">Sulfate adenylyltransferase</fullName>
        <ecNumber evidence="1">2.7.7.4</ecNumber>
    </recommendedName>
    <alternativeName>
        <fullName evidence="1">ATP-sulfurylase</fullName>
    </alternativeName>
    <alternativeName>
        <fullName evidence="1">Sulfate adenylate transferase</fullName>
        <shortName evidence="1">SAT</shortName>
    </alternativeName>
</protein>
<sequence>MSTRNELVNLIDETYDVSQIEKEIALDNIALSDLELLATGGYSPLTGFLGKKDYDSVVETLRLVNGSVWSIPITLPVTEEVAESLKAGEEVKLVNAGNVYGVIQIEDIFVPDKEKEALLVYKTTDEAHPGVKKLYERPNVYVGGAIILTKRFENNPFPSYHLDPIETREEFKKRGWKTVVGFQTRNPVHRAHEYIQKSALEIVDGLFLNPLVGETKSDDIPADVRMESYEVLLQNYYPKDRVFLSVFPAAMRYAGPREAIFHALVRKNFGCTHFIVGRDHAGVGDYYGTYEAQEIFTNFTVEELGITPLFFEHSFYCAKCEAMASTKTCPHGKEDHVILSGTKVRELLRNGEVPPSTFSRKEVVEVLIKGLKKEVVTE</sequence>